<sequence>MSKPTIAFLGATGGCINACLAHTLQTGYHAVALARTPSKLTALLRTQNIDQETLDSRLRIVTGDATDPEAVKSTLLLQPGFPTDPTTSASSPTPTLVSHIISGIGATGNFRGWCFEFDQPHICEEATRALLTALRNIYATYPEFMLPANVKSRPLLTVLSGMGVDPSQKQMDVPFLLRRVYHGLLHVPHADKWVMEEMLAKREAREFFRGVITVRPGSLLTGDHMLGSGYGYEKVRVGTEREEPSVGWTIPRADVGEWVFREVVVMGGGRWVDEKVTLTCW</sequence>
<protein>
    <recommendedName>
        <fullName evidence="3">Oxidase pynE</fullName>
        <ecNumber evidence="2">1.-.-.-</ecNumber>
    </recommendedName>
    <alternativeName>
        <fullName evidence="3">Pyranonigrin biosynthesis cluster protein E</fullName>
    </alternativeName>
</protein>
<reference key="1">
    <citation type="journal article" date="2007" name="Nat. Biotechnol.">
        <title>Genome sequencing and analysis of the versatile cell factory Aspergillus niger CBS 513.88.</title>
        <authorList>
            <person name="Pel H.J."/>
            <person name="de Winde J.H."/>
            <person name="Archer D.B."/>
            <person name="Dyer P.S."/>
            <person name="Hofmann G."/>
            <person name="Schaap P.J."/>
            <person name="Turner G."/>
            <person name="de Vries R.P."/>
            <person name="Albang R."/>
            <person name="Albermann K."/>
            <person name="Andersen M.R."/>
            <person name="Bendtsen J.D."/>
            <person name="Benen J.A.E."/>
            <person name="van den Berg M."/>
            <person name="Breestraat S."/>
            <person name="Caddick M.X."/>
            <person name="Contreras R."/>
            <person name="Cornell M."/>
            <person name="Coutinho P.M."/>
            <person name="Danchin E.G.J."/>
            <person name="Debets A.J.M."/>
            <person name="Dekker P."/>
            <person name="van Dijck P.W.M."/>
            <person name="van Dijk A."/>
            <person name="Dijkhuizen L."/>
            <person name="Driessen A.J.M."/>
            <person name="d'Enfert C."/>
            <person name="Geysens S."/>
            <person name="Goosen C."/>
            <person name="Groot G.S.P."/>
            <person name="de Groot P.W.J."/>
            <person name="Guillemette T."/>
            <person name="Henrissat B."/>
            <person name="Herweijer M."/>
            <person name="van den Hombergh J.P.T.W."/>
            <person name="van den Hondel C.A.M.J.J."/>
            <person name="van der Heijden R.T.J.M."/>
            <person name="van der Kaaij R.M."/>
            <person name="Klis F.M."/>
            <person name="Kools H.J."/>
            <person name="Kubicek C.P."/>
            <person name="van Kuyk P.A."/>
            <person name="Lauber J."/>
            <person name="Lu X."/>
            <person name="van der Maarel M.J.E.C."/>
            <person name="Meulenberg R."/>
            <person name="Menke H."/>
            <person name="Mortimer M.A."/>
            <person name="Nielsen J."/>
            <person name="Oliver S.G."/>
            <person name="Olsthoorn M."/>
            <person name="Pal K."/>
            <person name="van Peij N.N.M.E."/>
            <person name="Ram A.F.J."/>
            <person name="Rinas U."/>
            <person name="Roubos J.A."/>
            <person name="Sagt C.M.J."/>
            <person name="Schmoll M."/>
            <person name="Sun J."/>
            <person name="Ussery D."/>
            <person name="Varga J."/>
            <person name="Vervecken W."/>
            <person name="van de Vondervoort P.J.J."/>
            <person name="Wedler H."/>
            <person name="Woesten H.A.B."/>
            <person name="Zeng A.-P."/>
            <person name="van Ooyen A.J.J."/>
            <person name="Visser J."/>
            <person name="Stam H."/>
        </authorList>
    </citation>
    <scope>NUCLEOTIDE SEQUENCE [LARGE SCALE GENOMIC DNA]</scope>
    <source>
        <strain>ATCC MYA-4892 / CBS 513.88 / FGSC A1513</strain>
    </source>
</reference>
<reference key="2">
    <citation type="journal article" date="2013" name="ChemBioChem">
        <title>Pyranonigrin E: a PKS-NRPS hybrid metabolite from Aspergillus niger identified by genome mining.</title>
        <authorList>
            <person name="Awakawa T."/>
            <person name="Yang X.L."/>
            <person name="Wakimoto T."/>
            <person name="Abe I."/>
        </authorList>
    </citation>
    <scope>FUNCTION</scope>
    <scope>INDUCTION</scope>
</reference>
<reference key="3">
    <citation type="journal article" date="2015" name="Org. Lett.">
        <title>Elucidation of pyranonigrin biosynthetic pathway reveals a mode of tetramic acid, fused gamma-pyrone, and exo-methylene formation.</title>
        <authorList>
            <person name="Yamamoto T."/>
            <person name="Tsunematsu Y."/>
            <person name="Noguchi H."/>
            <person name="Hotta K."/>
            <person name="Watanabe K."/>
        </authorList>
    </citation>
    <scope>FUNCTION</scope>
    <scope>DISRUPTION PHENOTYPE</scope>
    <scope>CATALYTIC ACTIVITY</scope>
    <scope>PATHWAY</scope>
</reference>
<organism>
    <name type="scientific">Aspergillus niger (strain ATCC MYA-4892 / CBS 513.88 / FGSC A1513)</name>
    <dbReference type="NCBI Taxonomy" id="425011"/>
    <lineage>
        <taxon>Eukaryota</taxon>
        <taxon>Fungi</taxon>
        <taxon>Dikarya</taxon>
        <taxon>Ascomycota</taxon>
        <taxon>Pezizomycotina</taxon>
        <taxon>Eurotiomycetes</taxon>
        <taxon>Eurotiomycetidae</taxon>
        <taxon>Eurotiales</taxon>
        <taxon>Aspergillaceae</taxon>
        <taxon>Aspergillus</taxon>
        <taxon>Aspergillus subgen. Circumdati</taxon>
    </lineage>
</organism>
<gene>
    <name evidence="3" type="primary">pynE</name>
    <name type="ORF">An11g00330</name>
</gene>
<comment type="function">
    <text evidence="1 2 5">Oxidase; part of the gene cluster that mediates the biosynthesis of pyranonigrins, a family of antioxidative compounds (PubMed:24106156, PubMed:26414728). The first step of pyranonigrins biosynthesis is performed by the hybrid PKS-NRPS synthetase that condenses 6 malonyl-CoA units to an acetyl starter unit, to form a 1,3,5-trioxotetradecane-6,8-dienyl-ACP (PubMed:24106156). The enoyl reductase (ER) domain of pynA is likely to be functional during the first two rounds of polyketide chain extension, to generate the saturated C-C bonds of the alkyl side chain (Probable). PynA subsequently forms the amide bond between the acyl chain and L-serine (PubMed:24106156, PubMed:26414728). Although pynA has a terminal reductase domain, it appears to require the thioesterase pynI for the release of the straight-chain intermediate from pynA via the formation of a tetramic acid pyranonigrin J (PubMed:26414728). The methyltransferase pynC then coverts pyranonigrin J to pyranonigrin I via N-methylation (PubMed:26414728). The FAD-dependent monooxygenase pynG catalyzes an epoxidation-mediated cyclization to form the dihydro-gamma-pyrone moiety, followed by pynD-catalyzed oxidation of the alcohol to the ketone and enolization to yield the characteristic tetramic acid-fused gamma-pyrone core of pyranonigrin H (PubMed:26414728). Pyranonigrin H is substrate of pynH for dehydration-mediated exo-methylene formation from the serine side chain to produce pyranonigrin E, before the oxidase pynE reduces the exo-methylene of pyranonigrin E into a pendant methyl to form pyranonigrin G (PubMed:26414728). The FAD-linked oxidoreductase pynB performs the reverse reaction and converts pyranonigrin G back to pyranonigrin E (PubMed:26414728).</text>
</comment>
<comment type="pathway">
    <text evidence="2">Secondary metabolite biosynthesis.</text>
</comment>
<comment type="induction">
    <text evidence="1">Expression is positively regulated by the cluster-specific transcription factor pynR.</text>
</comment>
<comment type="disruption phenotype">
    <text evidence="2">Leads to a reduced accumulation of pyranonigrin E.</text>
</comment>
<comment type="similarity">
    <text evidence="4">Belongs to the avfA family.</text>
</comment>
<accession>A5ABG8</accession>
<keyword id="KW-0560">Oxidoreductase</keyword>
<keyword id="KW-1185">Reference proteome</keyword>
<proteinExistence type="evidence at protein level"/>
<name>PYNE_ASPNC</name>
<feature type="chain" id="PRO_0000450058" description="Oxidase pynE">
    <location>
        <begin position="1"/>
        <end position="281"/>
    </location>
</feature>
<dbReference type="EC" id="1.-.-.-" evidence="2"/>
<dbReference type="EMBL" id="AM270218">
    <property type="protein sequence ID" value="CAK48266.1"/>
    <property type="molecule type" value="Genomic_DNA"/>
</dbReference>
<dbReference type="RefSeq" id="XP_001394037.1">
    <property type="nucleotide sequence ID" value="XM_001394000.1"/>
</dbReference>
<dbReference type="EnsemblFungi" id="CAK48266">
    <property type="protein sequence ID" value="CAK48266"/>
    <property type="gene ID" value="An11g00330"/>
</dbReference>
<dbReference type="GeneID" id="4984239"/>
<dbReference type="KEGG" id="ang:An11g00330"/>
<dbReference type="VEuPathDB" id="FungiDB:An11g00330"/>
<dbReference type="HOGENOM" id="CLU_066707_0_0_1"/>
<dbReference type="Proteomes" id="UP000006706">
    <property type="component" value="Chromosome 7R"/>
</dbReference>
<dbReference type="GO" id="GO:0016491">
    <property type="term" value="F:oxidoreductase activity"/>
    <property type="evidence" value="ECO:0007669"/>
    <property type="project" value="UniProtKB-KW"/>
</dbReference>
<dbReference type="GO" id="GO:0019748">
    <property type="term" value="P:secondary metabolic process"/>
    <property type="evidence" value="ECO:0000317"/>
    <property type="project" value="AspGD"/>
</dbReference>
<dbReference type="FunFam" id="3.40.50.720:FF:001325">
    <property type="entry name" value="Aspergillus niger contig An11c0010, genomic contig"/>
    <property type="match status" value="1"/>
</dbReference>
<dbReference type="Gene3D" id="3.40.50.720">
    <property type="entry name" value="NAD(P)-binding Rossmann-like Domain"/>
    <property type="match status" value="1"/>
</dbReference>
<dbReference type="InterPro" id="IPR036291">
    <property type="entry name" value="NAD(P)-bd_dom_sf"/>
</dbReference>
<dbReference type="PANTHER" id="PTHR15020">
    <property type="entry name" value="FLAVIN REDUCTASE-RELATED"/>
    <property type="match status" value="1"/>
</dbReference>
<dbReference type="PANTHER" id="PTHR15020:SF50">
    <property type="entry name" value="UPF0659 PROTEIN YMR090W"/>
    <property type="match status" value="1"/>
</dbReference>
<dbReference type="SUPFAM" id="SSF51735">
    <property type="entry name" value="NAD(P)-binding Rossmann-fold domains"/>
    <property type="match status" value="1"/>
</dbReference>
<evidence type="ECO:0000269" key="1">
    <source>
    </source>
</evidence>
<evidence type="ECO:0000269" key="2">
    <source>
    </source>
</evidence>
<evidence type="ECO:0000303" key="3">
    <source>
    </source>
</evidence>
<evidence type="ECO:0000305" key="4"/>
<evidence type="ECO:0000305" key="5">
    <source>
    </source>
</evidence>